<gene>
    <name evidence="1" type="primary">rlmE</name>
    <name evidence="1" type="synonym">ftsJ</name>
    <name evidence="1" type="synonym">rrmJ</name>
    <name type="ordered locus">swp_1210</name>
</gene>
<proteinExistence type="inferred from homology"/>
<name>RLME_SHEPW</name>
<reference key="1">
    <citation type="journal article" date="2008" name="PLoS ONE">
        <title>Environmental adaptation: genomic analysis of the piezotolerant and psychrotolerant deep-sea iron reducing bacterium Shewanella piezotolerans WP3.</title>
        <authorList>
            <person name="Wang F."/>
            <person name="Wang J."/>
            <person name="Jian H."/>
            <person name="Zhang B."/>
            <person name="Li S."/>
            <person name="Wang F."/>
            <person name="Zeng X."/>
            <person name="Gao L."/>
            <person name="Bartlett D.H."/>
            <person name="Yu J."/>
            <person name="Hu S."/>
            <person name="Xiao X."/>
        </authorList>
    </citation>
    <scope>NUCLEOTIDE SEQUENCE [LARGE SCALE GENOMIC DNA]</scope>
    <source>
        <strain>WP3 / JCM 13877</strain>
    </source>
</reference>
<comment type="function">
    <text evidence="1">Specifically methylates the uridine in position 2552 of 23S rRNA at the 2'-O position of the ribose in the fully assembled 50S ribosomal subunit.</text>
</comment>
<comment type="catalytic activity">
    <reaction evidence="1">
        <text>uridine(2552) in 23S rRNA + S-adenosyl-L-methionine = 2'-O-methyluridine(2552) in 23S rRNA + S-adenosyl-L-homocysteine + H(+)</text>
        <dbReference type="Rhea" id="RHEA:42720"/>
        <dbReference type="Rhea" id="RHEA-COMP:10202"/>
        <dbReference type="Rhea" id="RHEA-COMP:10203"/>
        <dbReference type="ChEBI" id="CHEBI:15378"/>
        <dbReference type="ChEBI" id="CHEBI:57856"/>
        <dbReference type="ChEBI" id="CHEBI:59789"/>
        <dbReference type="ChEBI" id="CHEBI:65315"/>
        <dbReference type="ChEBI" id="CHEBI:74478"/>
        <dbReference type="EC" id="2.1.1.166"/>
    </reaction>
</comment>
<comment type="subcellular location">
    <subcellularLocation>
        <location evidence="1">Cytoplasm</location>
    </subcellularLocation>
</comment>
<comment type="similarity">
    <text evidence="1">Belongs to the class I-like SAM-binding methyltransferase superfamily. RNA methyltransferase RlmE family.</text>
</comment>
<accession>B8CKG5</accession>
<evidence type="ECO:0000255" key="1">
    <source>
        <dbReference type="HAMAP-Rule" id="MF_01547"/>
    </source>
</evidence>
<dbReference type="EC" id="2.1.1.166" evidence="1"/>
<dbReference type="EMBL" id="CP000472">
    <property type="protein sequence ID" value="ACJ28004.1"/>
    <property type="molecule type" value="Genomic_DNA"/>
</dbReference>
<dbReference type="RefSeq" id="WP_020911382.1">
    <property type="nucleotide sequence ID" value="NC_011566.1"/>
</dbReference>
<dbReference type="SMR" id="B8CKG5"/>
<dbReference type="STRING" id="225849.swp_1210"/>
<dbReference type="KEGG" id="swp:swp_1210"/>
<dbReference type="eggNOG" id="COG0293">
    <property type="taxonomic scope" value="Bacteria"/>
</dbReference>
<dbReference type="HOGENOM" id="CLU_009422_4_0_6"/>
<dbReference type="OrthoDB" id="9790080at2"/>
<dbReference type="Proteomes" id="UP000000753">
    <property type="component" value="Chromosome"/>
</dbReference>
<dbReference type="GO" id="GO:0005737">
    <property type="term" value="C:cytoplasm"/>
    <property type="evidence" value="ECO:0007669"/>
    <property type="project" value="UniProtKB-SubCell"/>
</dbReference>
<dbReference type="GO" id="GO:0008650">
    <property type="term" value="F:rRNA (uridine-2'-O-)-methyltransferase activity"/>
    <property type="evidence" value="ECO:0007669"/>
    <property type="project" value="UniProtKB-UniRule"/>
</dbReference>
<dbReference type="CDD" id="cd02440">
    <property type="entry name" value="AdoMet_MTases"/>
    <property type="match status" value="1"/>
</dbReference>
<dbReference type="FunFam" id="3.40.50.150:FF:000005">
    <property type="entry name" value="Ribosomal RNA large subunit methyltransferase E"/>
    <property type="match status" value="1"/>
</dbReference>
<dbReference type="Gene3D" id="3.40.50.150">
    <property type="entry name" value="Vaccinia Virus protein VP39"/>
    <property type="match status" value="1"/>
</dbReference>
<dbReference type="HAMAP" id="MF_01547">
    <property type="entry name" value="RNA_methyltr_E"/>
    <property type="match status" value="1"/>
</dbReference>
<dbReference type="InterPro" id="IPR050082">
    <property type="entry name" value="RNA_methyltr_RlmE"/>
</dbReference>
<dbReference type="InterPro" id="IPR002877">
    <property type="entry name" value="RNA_MeTrfase_FtsJ_dom"/>
</dbReference>
<dbReference type="InterPro" id="IPR015507">
    <property type="entry name" value="rRNA-MeTfrase_E"/>
</dbReference>
<dbReference type="InterPro" id="IPR029063">
    <property type="entry name" value="SAM-dependent_MTases_sf"/>
</dbReference>
<dbReference type="NCBIfam" id="NF008390">
    <property type="entry name" value="PRK11188.1"/>
    <property type="match status" value="1"/>
</dbReference>
<dbReference type="PANTHER" id="PTHR10920">
    <property type="entry name" value="RIBOSOMAL RNA METHYLTRANSFERASE"/>
    <property type="match status" value="1"/>
</dbReference>
<dbReference type="PANTHER" id="PTHR10920:SF18">
    <property type="entry name" value="RRNA METHYLTRANSFERASE 2, MITOCHONDRIAL"/>
    <property type="match status" value="1"/>
</dbReference>
<dbReference type="Pfam" id="PF01728">
    <property type="entry name" value="FtsJ"/>
    <property type="match status" value="1"/>
</dbReference>
<dbReference type="PIRSF" id="PIRSF005461">
    <property type="entry name" value="23S_rRNA_mtase"/>
    <property type="match status" value="1"/>
</dbReference>
<dbReference type="SUPFAM" id="SSF53335">
    <property type="entry name" value="S-adenosyl-L-methionine-dependent methyltransferases"/>
    <property type="match status" value="1"/>
</dbReference>
<feature type="chain" id="PRO_1000195020" description="Ribosomal RNA large subunit methyltransferase E">
    <location>
        <begin position="1"/>
        <end position="209"/>
    </location>
</feature>
<feature type="active site" description="Proton acceptor" evidence="1">
    <location>
        <position position="164"/>
    </location>
</feature>
<feature type="binding site" evidence="1">
    <location>
        <position position="63"/>
    </location>
    <ligand>
        <name>S-adenosyl-L-methionine</name>
        <dbReference type="ChEBI" id="CHEBI:59789"/>
    </ligand>
</feature>
<feature type="binding site" evidence="1">
    <location>
        <position position="65"/>
    </location>
    <ligand>
        <name>S-adenosyl-L-methionine</name>
        <dbReference type="ChEBI" id="CHEBI:59789"/>
    </ligand>
</feature>
<feature type="binding site" evidence="1">
    <location>
        <position position="83"/>
    </location>
    <ligand>
        <name>S-adenosyl-L-methionine</name>
        <dbReference type="ChEBI" id="CHEBI:59789"/>
    </ligand>
</feature>
<feature type="binding site" evidence="1">
    <location>
        <position position="99"/>
    </location>
    <ligand>
        <name>S-adenosyl-L-methionine</name>
        <dbReference type="ChEBI" id="CHEBI:59789"/>
    </ligand>
</feature>
<feature type="binding site" evidence="1">
    <location>
        <position position="124"/>
    </location>
    <ligand>
        <name>S-adenosyl-L-methionine</name>
        <dbReference type="ChEBI" id="CHEBI:59789"/>
    </ligand>
</feature>
<protein>
    <recommendedName>
        <fullName evidence="1">Ribosomal RNA large subunit methyltransferase E</fullName>
        <ecNumber evidence="1">2.1.1.166</ecNumber>
    </recommendedName>
    <alternativeName>
        <fullName evidence="1">23S rRNA Um2552 methyltransferase</fullName>
    </alternativeName>
    <alternativeName>
        <fullName evidence="1">rRNA (uridine-2'-O-)-methyltransferase</fullName>
    </alternativeName>
</protein>
<keyword id="KW-0963">Cytoplasm</keyword>
<keyword id="KW-0489">Methyltransferase</keyword>
<keyword id="KW-0698">rRNA processing</keyword>
<keyword id="KW-0949">S-adenosyl-L-methionine</keyword>
<keyword id="KW-0808">Transferase</keyword>
<organism>
    <name type="scientific">Shewanella piezotolerans (strain WP3 / JCM 13877)</name>
    <dbReference type="NCBI Taxonomy" id="225849"/>
    <lineage>
        <taxon>Bacteria</taxon>
        <taxon>Pseudomonadati</taxon>
        <taxon>Pseudomonadota</taxon>
        <taxon>Gammaproteobacteria</taxon>
        <taxon>Alteromonadales</taxon>
        <taxon>Shewanellaceae</taxon>
        <taxon>Shewanella</taxon>
    </lineage>
</organism>
<sequence length="209" mass="23116">MSGKKRTASSSRWMQEHFDDHYVKLAQKRGFRSRAAFKIEEIQEKDKLIRPGMTVVDLGAAPGGWSQVAVKLAGDKGKVIACDILPMDPIVGVDFLQGDFREEKVLDALLTRVGDAKVDVVLSDMAPNMSGTGGVDQPRAMYLVELALDMCHQVLAPNGCFAVKVFQGEGFDEYMKAVKEAFKTVKTRKPDSSRPRSREVYLVATGYKL</sequence>